<sequence length="147" mass="15909">MVDQARARRLAKRISEIVATAIEYEVKDPRLRFVTITDAKVTGDLREATVYYTVMGETIDAEPDYDAAAAGLAKAKGVLRSKVGAGTGVKFTPSLAFVLDKVPDAAREMEELLARARAADAEVARVAAEARHAGEPDPYKTDRDDAE</sequence>
<dbReference type="EMBL" id="AP006618">
    <property type="protein sequence ID" value="BAD58913.1"/>
    <property type="molecule type" value="Genomic_DNA"/>
</dbReference>
<dbReference type="RefSeq" id="WP_011210598.1">
    <property type="nucleotide sequence ID" value="NC_006361.1"/>
</dbReference>
<dbReference type="SMR" id="Q5YSC8"/>
<dbReference type="STRING" id="247156.NFA_40650"/>
<dbReference type="GeneID" id="61134708"/>
<dbReference type="KEGG" id="nfa:NFA_40650"/>
<dbReference type="eggNOG" id="COG0858">
    <property type="taxonomic scope" value="Bacteria"/>
</dbReference>
<dbReference type="HOGENOM" id="CLU_089475_0_0_11"/>
<dbReference type="OrthoDB" id="307788at2"/>
<dbReference type="Proteomes" id="UP000006820">
    <property type="component" value="Chromosome"/>
</dbReference>
<dbReference type="GO" id="GO:0005829">
    <property type="term" value="C:cytosol"/>
    <property type="evidence" value="ECO:0007669"/>
    <property type="project" value="TreeGrafter"/>
</dbReference>
<dbReference type="GO" id="GO:0043024">
    <property type="term" value="F:ribosomal small subunit binding"/>
    <property type="evidence" value="ECO:0007669"/>
    <property type="project" value="TreeGrafter"/>
</dbReference>
<dbReference type="GO" id="GO:0030490">
    <property type="term" value="P:maturation of SSU-rRNA"/>
    <property type="evidence" value="ECO:0007669"/>
    <property type="project" value="UniProtKB-UniRule"/>
</dbReference>
<dbReference type="FunFam" id="3.30.300.20:FF:000018">
    <property type="entry name" value="Ribosome-binding factor A"/>
    <property type="match status" value="1"/>
</dbReference>
<dbReference type="Gene3D" id="3.30.300.20">
    <property type="match status" value="1"/>
</dbReference>
<dbReference type="HAMAP" id="MF_00003">
    <property type="entry name" value="RbfA"/>
    <property type="match status" value="1"/>
</dbReference>
<dbReference type="InterPro" id="IPR015946">
    <property type="entry name" value="KH_dom-like_a/b"/>
</dbReference>
<dbReference type="InterPro" id="IPR000238">
    <property type="entry name" value="RbfA"/>
</dbReference>
<dbReference type="InterPro" id="IPR023799">
    <property type="entry name" value="RbfA_dom_sf"/>
</dbReference>
<dbReference type="InterPro" id="IPR020053">
    <property type="entry name" value="Ribosome-bd_factorA_CS"/>
</dbReference>
<dbReference type="NCBIfam" id="TIGR00082">
    <property type="entry name" value="rbfA"/>
    <property type="match status" value="1"/>
</dbReference>
<dbReference type="PANTHER" id="PTHR33515">
    <property type="entry name" value="RIBOSOME-BINDING FACTOR A, CHLOROPLASTIC-RELATED"/>
    <property type="match status" value="1"/>
</dbReference>
<dbReference type="PANTHER" id="PTHR33515:SF1">
    <property type="entry name" value="RIBOSOME-BINDING FACTOR A, CHLOROPLASTIC-RELATED"/>
    <property type="match status" value="1"/>
</dbReference>
<dbReference type="Pfam" id="PF02033">
    <property type="entry name" value="RBFA"/>
    <property type="match status" value="1"/>
</dbReference>
<dbReference type="SUPFAM" id="SSF89919">
    <property type="entry name" value="Ribosome-binding factor A, RbfA"/>
    <property type="match status" value="1"/>
</dbReference>
<dbReference type="PROSITE" id="PS01319">
    <property type="entry name" value="RBFA"/>
    <property type="match status" value="1"/>
</dbReference>
<feature type="chain" id="PRO_0000102703" description="Ribosome-binding factor A">
    <location>
        <begin position="1"/>
        <end position="147"/>
    </location>
</feature>
<feature type="region of interest" description="Disordered" evidence="2">
    <location>
        <begin position="127"/>
        <end position="147"/>
    </location>
</feature>
<accession>Q5YSC8</accession>
<proteinExistence type="inferred from homology"/>
<organism>
    <name type="scientific">Nocardia farcinica (strain IFM 10152)</name>
    <dbReference type="NCBI Taxonomy" id="247156"/>
    <lineage>
        <taxon>Bacteria</taxon>
        <taxon>Bacillati</taxon>
        <taxon>Actinomycetota</taxon>
        <taxon>Actinomycetes</taxon>
        <taxon>Mycobacteriales</taxon>
        <taxon>Nocardiaceae</taxon>
        <taxon>Nocardia</taxon>
    </lineage>
</organism>
<gene>
    <name evidence="1" type="primary">rbfA</name>
    <name type="ordered locus">NFA_40650</name>
</gene>
<reference key="1">
    <citation type="journal article" date="2004" name="Proc. Natl. Acad. Sci. U.S.A.">
        <title>The complete genomic sequence of Nocardia farcinica IFM 10152.</title>
        <authorList>
            <person name="Ishikawa J."/>
            <person name="Yamashita A."/>
            <person name="Mikami Y."/>
            <person name="Hoshino Y."/>
            <person name="Kurita H."/>
            <person name="Hotta K."/>
            <person name="Shiba T."/>
            <person name="Hattori M."/>
        </authorList>
    </citation>
    <scope>NUCLEOTIDE SEQUENCE [LARGE SCALE GENOMIC DNA]</scope>
    <source>
        <strain>IFM 10152</strain>
    </source>
</reference>
<protein>
    <recommendedName>
        <fullName evidence="1">Ribosome-binding factor A</fullName>
    </recommendedName>
</protein>
<keyword id="KW-0963">Cytoplasm</keyword>
<keyword id="KW-1185">Reference proteome</keyword>
<keyword id="KW-0690">Ribosome biogenesis</keyword>
<evidence type="ECO:0000255" key="1">
    <source>
        <dbReference type="HAMAP-Rule" id="MF_00003"/>
    </source>
</evidence>
<evidence type="ECO:0000256" key="2">
    <source>
        <dbReference type="SAM" id="MobiDB-lite"/>
    </source>
</evidence>
<comment type="function">
    <text evidence="1">One of several proteins that assist in the late maturation steps of the functional core of the 30S ribosomal subunit. Associates with free 30S ribosomal subunits (but not with 30S subunits that are part of 70S ribosomes or polysomes). Required for efficient processing of 16S rRNA. May interact with the 5'-terminal helix region of 16S rRNA.</text>
</comment>
<comment type="subunit">
    <text evidence="1">Monomer. Binds 30S ribosomal subunits, but not 50S ribosomal subunits or 70S ribosomes.</text>
</comment>
<comment type="subcellular location">
    <subcellularLocation>
        <location evidence="1">Cytoplasm</location>
    </subcellularLocation>
</comment>
<comment type="similarity">
    <text evidence="1">Belongs to the RbfA family.</text>
</comment>
<name>RBFA_NOCFA</name>